<gene>
    <name evidence="1" type="primary">L3</name>
</gene>
<comment type="function">
    <text evidence="1">Cleaves viral precursor proteins (pTP, pIIIa, pVI, pVII, pVIII, and pX) inside newly assembled particles giving rise to mature virions. Protease complexed to its cofactor slides along the viral DNA to specifically locate and cleave the viral precursors. Mature virions have a weakened organization compared to the unmature virions, thereby facilitating subsequent uncoating. Without maturation, the particle lacks infectivity and is unable to uncoat. Late in adenovirus infection, in the cytoplasm, may participate in the cytoskeleton destruction. Cleaves host cell cytoskeletal keratins K7 and K18.</text>
</comment>
<comment type="catalytic activity">
    <reaction evidence="1">
        <text>Cleaves proteins of the adenovirus and its host cell at two consensus sites: -Yaa-Xaa-Gly-Gly-|-Xaa- and -Yaa-Xaa-Gly-Xaa-|-Gly- (in which Yaa is Met, Ile or Leu, and Xaa is any amino acid).</text>
        <dbReference type="EC" id="3.4.22.39"/>
    </reaction>
</comment>
<comment type="activity regulation">
    <text evidence="1">Requires DNA and protease cofactor for maximal activation. Inside nascent virions, becomes partially activated by binding to the viral DNA, allowing it to cleave the cofactor that binds to the protease and fully activates it. Actin, like the viral protease cofactor, seems to act as a cofactor in the cleavage of cytokeratin 18 and of actin itself.</text>
</comment>
<comment type="subunit">
    <text evidence="1">Interacts with protease cofactor pVI-C; this interaction is necessary for protease activation.</text>
</comment>
<comment type="subcellular location">
    <subcellularLocation>
        <location evidence="1">Virion</location>
    </subcellularLocation>
    <subcellularLocation>
        <location evidence="1">Host nucleus</location>
    </subcellularLocation>
    <text evidence="1">Present in about 10 copies per virion.</text>
</comment>
<comment type="induction">
    <text evidence="1">Expressed in the late phase of the viral replicative cycle.</text>
</comment>
<comment type="miscellaneous">
    <text evidence="1">All late proteins expressed from the major late promoter are produced by alternative splicing and alternative polyadenylation of the same gene giving rise to non-overlapping ORFs. A leader sequence is present in the N-terminus of all these mRNAs and is recognized by the viral shutoff protein to provide expression although conventional translation via ribosome scanning from the cap has been shut off in the host cell.</text>
</comment>
<comment type="similarity">
    <text evidence="1">Belongs to the peptidase C5 family.</text>
</comment>
<dbReference type="EC" id="3.4.22.39" evidence="1"/>
<dbReference type="EMBL" id="U77082">
    <property type="protein sequence ID" value="AAB38726.1"/>
    <property type="molecule type" value="Genomic_DNA"/>
</dbReference>
<dbReference type="RefSeq" id="AP_000623.1">
    <property type="nucleotide sequence ID" value="AC_000020.1"/>
</dbReference>
<dbReference type="SMR" id="P87563"/>
<dbReference type="MEROPS" id="C05.001"/>
<dbReference type="Proteomes" id="UP000118097">
    <property type="component" value="Segment"/>
</dbReference>
<dbReference type="GO" id="GO:0042025">
    <property type="term" value="C:host cell nucleus"/>
    <property type="evidence" value="ECO:0007669"/>
    <property type="project" value="UniProtKB-SubCell"/>
</dbReference>
<dbReference type="GO" id="GO:0044423">
    <property type="term" value="C:virion component"/>
    <property type="evidence" value="ECO:0007669"/>
    <property type="project" value="UniProtKB-UniRule"/>
</dbReference>
<dbReference type="GO" id="GO:0004197">
    <property type="term" value="F:cysteine-type endopeptidase activity"/>
    <property type="evidence" value="ECO:0007669"/>
    <property type="project" value="UniProtKB-UniRule"/>
</dbReference>
<dbReference type="GO" id="GO:0003677">
    <property type="term" value="F:DNA binding"/>
    <property type="evidence" value="ECO:0007669"/>
    <property type="project" value="UniProtKB-UniRule"/>
</dbReference>
<dbReference type="GO" id="GO:0006508">
    <property type="term" value="P:proteolysis"/>
    <property type="evidence" value="ECO:0007669"/>
    <property type="project" value="UniProtKB-KW"/>
</dbReference>
<dbReference type="Gene3D" id="3.40.395.10">
    <property type="entry name" value="Adenoviral Proteinase, Chain A"/>
    <property type="match status" value="1"/>
</dbReference>
<dbReference type="HAMAP" id="MF_04059">
    <property type="entry name" value="ADV_PRO"/>
    <property type="match status" value="1"/>
</dbReference>
<dbReference type="InterPro" id="IPR038765">
    <property type="entry name" value="Papain-like_cys_pep_sf"/>
</dbReference>
<dbReference type="InterPro" id="IPR000855">
    <property type="entry name" value="Peptidase_C5"/>
</dbReference>
<dbReference type="Pfam" id="PF00770">
    <property type="entry name" value="Peptidase_C5"/>
    <property type="match status" value="1"/>
</dbReference>
<dbReference type="PIRSF" id="PIRSF001218">
    <property type="entry name" value="Protease_ADV"/>
    <property type="match status" value="1"/>
</dbReference>
<dbReference type="PRINTS" id="PR00703">
    <property type="entry name" value="ADVENDOPTASE"/>
</dbReference>
<dbReference type="SUPFAM" id="SSF54001">
    <property type="entry name" value="Cysteine proteinases"/>
    <property type="match status" value="1"/>
</dbReference>
<reference key="1">
    <citation type="submission" date="1996-11" db="EMBL/GenBank/DDBJ databases">
        <title>Complete DNA sequence and genomic organization of canine adenovirus type 2.</title>
        <authorList>
            <person name="Campbell J.B."/>
            <person name="Zhao Y."/>
        </authorList>
    </citation>
    <scope>NUCLEOTIDE SEQUENCE [LARGE SCALE GENOMIC DNA]</scope>
</reference>
<organism>
    <name type="scientific">Canine adenovirus serotype 2 (strain Toronto A 26-61)</name>
    <name type="common">CAdV-2</name>
    <name type="synonym">Canine adenovirus 2 (strain Toronto A 26-61)</name>
    <dbReference type="NCBI Taxonomy" id="69152"/>
    <lineage>
        <taxon>Viruses</taxon>
        <taxon>Varidnaviria</taxon>
        <taxon>Bamfordvirae</taxon>
        <taxon>Preplasmiviricota</taxon>
        <taxon>Tectiliviricetes</taxon>
        <taxon>Rowavirales</taxon>
        <taxon>Adenoviridae</taxon>
        <taxon>Mastadenovirus</taxon>
        <taxon>Canine mastadenovirus A</taxon>
    </lineage>
</organism>
<protein>
    <recommendedName>
        <fullName evidence="1">Protease</fullName>
        <ecNumber evidence="1">3.4.22.39</ecNumber>
    </recommendedName>
    <alternativeName>
        <fullName evidence="1">Adenain</fullName>
    </alternativeName>
    <alternativeName>
        <fullName evidence="1">Adenovirus protease</fullName>
        <shortName evidence="1">AVP</shortName>
    </alternativeName>
    <alternativeName>
        <fullName evidence="1">Adenovirus proteinase</fullName>
    </alternativeName>
    <alternativeName>
        <fullName evidence="1">Endoprotease</fullName>
    </alternativeName>
</protein>
<feature type="chain" id="PRO_0000218037" description="Protease">
    <location>
        <begin position="1"/>
        <end position="206"/>
    </location>
</feature>
<feature type="active site" evidence="1">
    <location>
        <position position="57"/>
    </location>
</feature>
<feature type="active site" evidence="1">
    <location>
        <position position="74"/>
    </location>
</feature>
<feature type="active site" evidence="1">
    <location>
        <position position="125"/>
    </location>
</feature>
<feature type="site" description="Cleavage; by autolysis" evidence="1">
    <location>
        <begin position="54"/>
        <end position="55"/>
    </location>
</feature>
<feature type="disulfide bond" description="Interchain (with C-10 in cleaved protease cofactor pVI-C)" evidence="1">
    <location>
        <position position="107"/>
    </location>
</feature>
<organismHost>
    <name type="scientific">Canis lupus familiaris</name>
    <name type="common">Dog</name>
    <name type="synonym">Canis familiaris</name>
    <dbReference type="NCBI Taxonomy" id="9615"/>
</organismHost>
<accession>P87563</accession>
<sequence>MAEGGSSEEELRAIVHNLGVSPFFLGTFDKRFPGFISSQRMACAIVNTAGRETGGVHWLAMAWNPRSKTFYMFDPFGFSDSKLKQVYSFEYEGLLRRSAIASSPDRCVTLAKSNETIQGPNSAACGLFCCMFLHAFVNWPDDPFDHNPTMGPLKSVPNYKLNDPTVQYVLWGNQEKLYKFLEKHSAYFRAHAAAIKARTAFNKLKQ</sequence>
<name>PRO_ADECT</name>
<keyword id="KW-0068">Autocatalytic cleavage</keyword>
<keyword id="KW-1015">Disulfide bond</keyword>
<keyword id="KW-0238">DNA-binding</keyword>
<keyword id="KW-1048">Host nucleus</keyword>
<keyword id="KW-0378">Hydrolase</keyword>
<keyword id="KW-0426">Late protein</keyword>
<keyword id="KW-0645">Protease</keyword>
<keyword id="KW-1185">Reference proteome</keyword>
<keyword id="KW-0788">Thiol protease</keyword>
<keyword id="KW-0946">Virion</keyword>
<evidence type="ECO:0000255" key="1">
    <source>
        <dbReference type="HAMAP-Rule" id="MF_04059"/>
    </source>
</evidence>
<proteinExistence type="inferred from homology"/>